<feature type="chain" id="PRO_0000116065" description="DNA polymerase processivity factor">
    <location>
        <begin position="1" status="less than"/>
        <end position="388"/>
    </location>
</feature>
<feature type="region of interest" description="Disordered" evidence="2">
    <location>
        <begin position="20"/>
        <end position="44"/>
    </location>
</feature>
<feature type="region of interest" description="Disordered" evidence="2">
    <location>
        <begin position="306"/>
        <end position="388"/>
    </location>
</feature>
<feature type="compositionally biased region" description="Basic residues" evidence="2">
    <location>
        <begin position="26"/>
        <end position="36"/>
    </location>
</feature>
<feature type="compositionally biased region" description="Basic and acidic residues" evidence="2">
    <location>
        <begin position="306"/>
        <end position="328"/>
    </location>
</feature>
<feature type="non-terminal residue">
    <location>
        <position position="1"/>
    </location>
</feature>
<organismHost>
    <name type="scientific">Homo sapiens</name>
    <name type="common">Human</name>
    <dbReference type="NCBI Taxonomy" id="9606"/>
</organismHost>
<comment type="function">
    <text evidence="1">Accessory subunit of the DNA polymerase that acts to increase the processivity of polymerization.</text>
</comment>
<comment type="similarity">
    <text evidence="3">Belongs to the herpesviridae polymerase accessory protein family.</text>
</comment>
<comment type="sequence caution" evidence="3">
    <conflict type="erroneous initiation">
        <sequence resource="EMBL-CDS" id="AAA43853"/>
    </conflict>
</comment>
<keyword id="KW-0235">DNA replication</keyword>
<keyword id="KW-0238">DNA-binding</keyword>
<keyword id="KW-0597">Phosphoprotein</keyword>
<dbReference type="EMBL" id="M62700">
    <property type="protein sequence ID" value="AAA43853.1"/>
    <property type="status" value="ALT_INIT"/>
    <property type="molecule type" value="mRNA"/>
</dbReference>
<dbReference type="SMR" id="P27417"/>
<dbReference type="GO" id="GO:0003677">
    <property type="term" value="F:DNA binding"/>
    <property type="evidence" value="ECO:0007669"/>
    <property type="project" value="UniProtKB-KW"/>
</dbReference>
<dbReference type="GO" id="GO:0030337">
    <property type="term" value="F:DNA polymerase processivity factor activity"/>
    <property type="evidence" value="ECO:0007669"/>
    <property type="project" value="InterPro"/>
</dbReference>
<dbReference type="GO" id="GO:0006260">
    <property type="term" value="P:DNA replication"/>
    <property type="evidence" value="ECO:0007669"/>
    <property type="project" value="UniProtKB-KW"/>
</dbReference>
<dbReference type="GO" id="GO:0019079">
    <property type="term" value="P:viral genome replication"/>
    <property type="evidence" value="ECO:0007669"/>
    <property type="project" value="InterPro"/>
</dbReference>
<dbReference type="Gene3D" id="3.70.10.10">
    <property type="match status" value="1"/>
</dbReference>
<dbReference type="InterPro" id="IPR046938">
    <property type="entry name" value="DNA_clamp_sf"/>
</dbReference>
<dbReference type="InterPro" id="IPR004997">
    <property type="entry name" value="Herpes_PAP"/>
</dbReference>
<dbReference type="Pfam" id="PF03325">
    <property type="entry name" value="Herpes_PAP"/>
    <property type="match status" value="1"/>
</dbReference>
<dbReference type="SUPFAM" id="SSF55979">
    <property type="entry name" value="DNA clamp"/>
    <property type="match status" value="2"/>
</dbReference>
<name>VPAP_HHV6G</name>
<accession>P27417</accession>
<evidence type="ECO:0000250" key="1"/>
<evidence type="ECO:0000256" key="2">
    <source>
        <dbReference type="SAM" id="MobiDB-lite"/>
    </source>
</evidence>
<evidence type="ECO:0000305" key="3"/>
<proteinExistence type="evidence at transcript level"/>
<protein>
    <recommendedName>
        <fullName>DNA polymerase processivity factor</fullName>
    </recommendedName>
    <alternativeName>
        <fullName>Phosphoprotein P41</fullName>
        <shortName>PP41</shortName>
    </alternativeName>
    <alternativeName>
        <fullName>Polymerase accessory protein</fullName>
        <shortName>PAP</shortName>
    </alternativeName>
</protein>
<sequence>FFFFKAHKARVGARTSFLTEMERGSRDHHRDHRDHREHRETREPPTLAFHMKSWKTINKSLKAFAKLLKENATVTFTPQPSIIIQSAKNHLVQKLTIQAECLFLSDTDRFLTKTINNHIPLFESFMNIISNPEVTKMYIQHDSDLYTRVLVTASDTCTQASVPCVHGQEVVRDTGRSPLRIDLDHSTVSDVLKWLSPVTKTKRSGKSDALMAHIIVQVNPPTIKFVTEMNELEFSNSNKVIFYDVKNMRFNLSAKNLQQALSMCAVIKTSCSLRTVAAKDCKLILTSKSTLLTVEAFLTQEQLKEESRFERMGKQDDGKGDRSHKNEDGSALASKQEMQYEITNYMVPAKNGTAGSSLFNEKEDSESDDSMHFDYSSNPNPKRQRCVV</sequence>
<gene>
    <name type="primary">U27</name>
</gene>
<reference key="1">
    <citation type="journal article" date="1991" name="J. Virol.">
        <title>Identification, characterization, and sequence analysis of a cDNA encoding a phosphoprotein of human herpesvirus 6.</title>
        <authorList>
            <person name="Chang C.K."/>
            <person name="Balachandran N."/>
        </authorList>
    </citation>
    <scope>NUCLEOTIDE SEQUENCE [MRNA]</scope>
</reference>
<reference key="2">
    <citation type="submission" date="1994-01" db="EMBL/GenBank/DDBJ databases">
        <authorList>
            <person name="Chang C.K."/>
            <person name="Balachandran N."/>
        </authorList>
    </citation>
    <scope>SEQUENCE REVISION</scope>
</reference>
<organism>
    <name type="scientific">Human herpesvirus 6A (strain GS)</name>
    <name type="common">HHV-6 variant A</name>
    <name type="synonym">Human B lymphotropic virus</name>
    <dbReference type="NCBI Taxonomy" id="10369"/>
    <lineage>
        <taxon>Viruses</taxon>
        <taxon>Duplodnaviria</taxon>
        <taxon>Heunggongvirae</taxon>
        <taxon>Peploviricota</taxon>
        <taxon>Herviviricetes</taxon>
        <taxon>Herpesvirales</taxon>
        <taxon>Orthoherpesviridae</taxon>
        <taxon>Betaherpesvirinae</taxon>
        <taxon>Roseolovirus</taxon>
        <taxon>Roseolovirus humanbeta6a</taxon>
        <taxon>Human betaherpesvirus 6A</taxon>
    </lineage>
</organism>